<organism>
    <name type="scientific">Methanosarcina barkeri (strain Fusaro / DSM 804)</name>
    <dbReference type="NCBI Taxonomy" id="269797"/>
    <lineage>
        <taxon>Archaea</taxon>
        <taxon>Methanobacteriati</taxon>
        <taxon>Methanobacteriota</taxon>
        <taxon>Stenosarchaea group</taxon>
        <taxon>Methanomicrobia</taxon>
        <taxon>Methanosarcinales</taxon>
        <taxon>Methanosarcinaceae</taxon>
        <taxon>Methanosarcina</taxon>
    </lineage>
</organism>
<dbReference type="EC" id="4.1.1.31" evidence="1"/>
<dbReference type="EMBL" id="CP000099">
    <property type="protein sequence ID" value="AAZ71539.1"/>
    <property type="molecule type" value="Genomic_DNA"/>
</dbReference>
<dbReference type="SMR" id="Q469A3"/>
<dbReference type="STRING" id="269797.Mbar_A2632"/>
<dbReference type="PaxDb" id="269797-Mbar_A2632"/>
<dbReference type="KEGG" id="mba:Mbar_A2632"/>
<dbReference type="eggNOG" id="arCOG04435">
    <property type="taxonomic scope" value="Archaea"/>
</dbReference>
<dbReference type="HOGENOM" id="CLU_517433_0_0_2"/>
<dbReference type="OrthoDB" id="85849at2157"/>
<dbReference type="GO" id="GO:0000287">
    <property type="term" value="F:magnesium ion binding"/>
    <property type="evidence" value="ECO:0007669"/>
    <property type="project" value="UniProtKB-UniRule"/>
</dbReference>
<dbReference type="GO" id="GO:0008964">
    <property type="term" value="F:phosphoenolpyruvate carboxylase activity"/>
    <property type="evidence" value="ECO:0007669"/>
    <property type="project" value="UniProtKB-UniRule"/>
</dbReference>
<dbReference type="GO" id="GO:0015977">
    <property type="term" value="P:carbon fixation"/>
    <property type="evidence" value="ECO:0007669"/>
    <property type="project" value="UniProtKB-UniRule"/>
</dbReference>
<dbReference type="GO" id="GO:0006107">
    <property type="term" value="P:oxaloacetate metabolic process"/>
    <property type="evidence" value="ECO:0007669"/>
    <property type="project" value="UniProtKB-UniRule"/>
</dbReference>
<dbReference type="GO" id="GO:0006099">
    <property type="term" value="P:tricarboxylic acid cycle"/>
    <property type="evidence" value="ECO:0007669"/>
    <property type="project" value="InterPro"/>
</dbReference>
<dbReference type="HAMAP" id="MF_01904">
    <property type="entry name" value="PEPcase_type2"/>
    <property type="match status" value="1"/>
</dbReference>
<dbReference type="InterPro" id="IPR007566">
    <property type="entry name" value="PEP_COase_arc-type"/>
</dbReference>
<dbReference type="InterPro" id="IPR015813">
    <property type="entry name" value="Pyrv/PenolPyrv_kinase-like_dom"/>
</dbReference>
<dbReference type="NCBIfam" id="TIGR02751">
    <property type="entry name" value="PEPCase_arch"/>
    <property type="match status" value="1"/>
</dbReference>
<dbReference type="Pfam" id="PF14010">
    <property type="entry name" value="PEPcase_2"/>
    <property type="match status" value="1"/>
</dbReference>
<dbReference type="PIRSF" id="PIRSF006677">
    <property type="entry name" value="UCP006677"/>
    <property type="match status" value="1"/>
</dbReference>
<dbReference type="SUPFAM" id="SSF51621">
    <property type="entry name" value="Phosphoenolpyruvate/pyruvate domain"/>
    <property type="match status" value="1"/>
</dbReference>
<feature type="chain" id="PRO_0000309603" description="Phosphoenolpyruvate carboxylase">
    <location>
        <begin position="1"/>
        <end position="526"/>
    </location>
</feature>
<keyword id="KW-0120">Carbon dioxide fixation</keyword>
<keyword id="KW-0456">Lyase</keyword>
<keyword id="KW-0460">Magnesium</keyword>
<protein>
    <recommendedName>
        <fullName evidence="1">Phosphoenolpyruvate carboxylase</fullName>
        <shortName evidence="1">PEPC</shortName>
        <shortName evidence="1">PEPCase</shortName>
        <ecNumber evidence="1">4.1.1.31</ecNumber>
    </recommendedName>
</protein>
<comment type="function">
    <text evidence="1">Catalyzes the irreversible beta-carboxylation of phosphoenolpyruvate (PEP) to form oxaloacetate (OAA), a four-carbon dicarboxylic acid source for the tricarboxylic acid cycle.</text>
</comment>
<comment type="catalytic activity">
    <reaction evidence="1">
        <text>oxaloacetate + phosphate = phosphoenolpyruvate + hydrogencarbonate</text>
        <dbReference type="Rhea" id="RHEA:28370"/>
        <dbReference type="ChEBI" id="CHEBI:16452"/>
        <dbReference type="ChEBI" id="CHEBI:17544"/>
        <dbReference type="ChEBI" id="CHEBI:43474"/>
        <dbReference type="ChEBI" id="CHEBI:58702"/>
        <dbReference type="EC" id="4.1.1.31"/>
    </reaction>
</comment>
<comment type="cofactor">
    <cofactor evidence="1">
        <name>Mg(2+)</name>
        <dbReference type="ChEBI" id="CHEBI:18420"/>
    </cofactor>
</comment>
<comment type="subunit">
    <text evidence="1">Homotetramer.</text>
</comment>
<comment type="similarity">
    <text evidence="1">Belongs to the PEPCase type 2 family.</text>
</comment>
<evidence type="ECO:0000255" key="1">
    <source>
        <dbReference type="HAMAP-Rule" id="MF_01904"/>
    </source>
</evidence>
<sequence>MSRKTVFPKVMCTQHPDSASKYIATQEEPGEAIEAAQIFGCDEYMPDYEGKATPYHQNVQVVSKFIEETDLIPGKDIIITPRAPSAVQENQFRQLMVMMSIAEANYNALEYSDVQAINEFVHPMTDSVREIIGAQQHMVDVSELAKKEFGFSMEVPCIIPLIEDAPALLHAKELAENTLFAWKGHFGTVPDKFRVFLGKSDSALSFGHVASTLSCKYAINGICELNSELDTQTGIIFGAGTLPFRGHLDLMNAENFFKEYRGVGTITLQSALRYSHKKGDAESLVKLAKARLPETPELFSAEEKEEIINLIGIFGASYSRIIRQLAPTINRIADLLPQQRDRLMHKGTGGYSRSAPDISGLVNLCRTDIGKELEASMPAEDLQLPRAIKFTGALYSIGLPPEFIGTGRALEEAREKLGEAACENLLTKYFPSLAGDLNFASEYLDLNVASRFLSSECLKEVSKDLDILHGAFALETSPEPSYRILVEMMQPDLLQAGSRGNCMDEEVSQLVCSTLTKMGKIRKALG</sequence>
<reference key="1">
    <citation type="journal article" date="2006" name="J. Bacteriol.">
        <title>The Methanosarcina barkeri genome: comparative analysis with Methanosarcina acetivorans and Methanosarcina mazei reveals extensive rearrangement within methanosarcinal genomes.</title>
        <authorList>
            <person name="Maeder D.L."/>
            <person name="Anderson I."/>
            <person name="Brettin T.S."/>
            <person name="Bruce D.C."/>
            <person name="Gilna P."/>
            <person name="Han C.S."/>
            <person name="Lapidus A."/>
            <person name="Metcalf W.W."/>
            <person name="Saunders E."/>
            <person name="Tapia R."/>
            <person name="Sowers K.R."/>
        </authorList>
    </citation>
    <scope>NUCLEOTIDE SEQUENCE [LARGE SCALE GENOMIC DNA]</scope>
    <source>
        <strain>Fusaro / DSM 804</strain>
    </source>
</reference>
<name>CAPPA_METBF</name>
<accession>Q469A3</accession>
<gene>
    <name evidence="1" type="primary">ppcA</name>
    <name type="ordered locus">Mbar_A2632</name>
</gene>
<proteinExistence type="inferred from homology"/>